<name>GLMM_COREF</name>
<protein>
    <recommendedName>
        <fullName evidence="1">Phosphoglucosamine mutase</fullName>
        <ecNumber evidence="1">5.4.2.10</ecNumber>
    </recommendedName>
</protein>
<gene>
    <name evidence="1" type="primary">glmM</name>
    <name type="ordered locus">CE0588</name>
</gene>
<comment type="function">
    <text evidence="1">Catalyzes the conversion of glucosamine-6-phosphate to glucosamine-1-phosphate.</text>
</comment>
<comment type="catalytic activity">
    <reaction evidence="1">
        <text>alpha-D-glucosamine 1-phosphate = D-glucosamine 6-phosphate</text>
        <dbReference type="Rhea" id="RHEA:23424"/>
        <dbReference type="ChEBI" id="CHEBI:58516"/>
        <dbReference type="ChEBI" id="CHEBI:58725"/>
        <dbReference type="EC" id="5.4.2.10"/>
    </reaction>
</comment>
<comment type="cofactor">
    <cofactor evidence="1">
        <name>Mg(2+)</name>
        <dbReference type="ChEBI" id="CHEBI:18420"/>
    </cofactor>
    <text evidence="1">Binds 1 Mg(2+) ion per subunit.</text>
</comment>
<comment type="PTM">
    <text evidence="1">Activated by phosphorylation.</text>
</comment>
<comment type="similarity">
    <text evidence="1">Belongs to the phosphohexose mutase family.</text>
</comment>
<comment type="sequence caution" evidence="2">
    <conflict type="erroneous initiation">
        <sequence resource="EMBL-CDS" id="BAC17398"/>
    </conflict>
</comment>
<reference key="1">
    <citation type="journal article" date="2003" name="Genome Res.">
        <title>Comparative complete genome sequence analysis of the amino acid replacements responsible for the thermostability of Corynebacterium efficiens.</title>
        <authorList>
            <person name="Nishio Y."/>
            <person name="Nakamura Y."/>
            <person name="Kawarabayasi Y."/>
            <person name="Usuda Y."/>
            <person name="Kimura E."/>
            <person name="Sugimoto S."/>
            <person name="Matsui K."/>
            <person name="Yamagishi A."/>
            <person name="Kikuchi H."/>
            <person name="Ikeo K."/>
            <person name="Gojobori T."/>
        </authorList>
    </citation>
    <scope>NUCLEOTIDE SEQUENCE [LARGE SCALE GENOMIC DNA]</scope>
    <source>
        <strain>DSM 44549 / YS-314 / AJ 12310 / JCM 11189 / NBRC 100395</strain>
    </source>
</reference>
<sequence length="447" mass="46304">MTRLFGTDGVRGLANKTLTAPLALKLGAAAAHVLTAGTRPHGRRPVAIVGRDPRVSGEMLAAALAAGMASRGVDVLRVGVIPTPGVAFLTDDYGADMGVMISASHNPMPDNGIKFFSAGGHKLPDEVEDEIERVMDDLPEEGPTGHGIGRVIEEAPDARGRYLQHLADAVPTDLSGITVVVDAANGAASVIAPQAYEAAGAKVIAIHNTPNAYNINEKCGSTHMDQIQAAVLEHGADLGLAHDGDADRCLAVDSDGNIVDGDQIMAILAIAMKENSELRKNTLVATVMSNLGLKLAMEKADIQLRTTKVGDRYVLEELNAGGFALGGEQSGHIVLPDHGTTGDGTLTGLSLMARMAATGKPLSELAAAMTVLPQVLINVPVADKSSIMKSANVQAAVAAAEEELGGTGRVLLRPSGTEELFRVMVEAAEQEQARRVAGRLAAVVAEA</sequence>
<dbReference type="EC" id="5.4.2.10" evidence="1"/>
<dbReference type="EMBL" id="BA000035">
    <property type="protein sequence ID" value="BAC17398.1"/>
    <property type="status" value="ALT_INIT"/>
    <property type="molecule type" value="Genomic_DNA"/>
</dbReference>
<dbReference type="RefSeq" id="WP_035109753.1">
    <property type="nucleotide sequence ID" value="NC_004369.1"/>
</dbReference>
<dbReference type="SMR" id="Q8FS18"/>
<dbReference type="STRING" id="196164.gene:10740990"/>
<dbReference type="KEGG" id="cef:CE0588"/>
<dbReference type="eggNOG" id="COG1109">
    <property type="taxonomic scope" value="Bacteria"/>
</dbReference>
<dbReference type="HOGENOM" id="CLU_016950_7_0_11"/>
<dbReference type="OrthoDB" id="9803322at2"/>
<dbReference type="Proteomes" id="UP000001409">
    <property type="component" value="Chromosome"/>
</dbReference>
<dbReference type="GO" id="GO:0005829">
    <property type="term" value="C:cytosol"/>
    <property type="evidence" value="ECO:0007669"/>
    <property type="project" value="TreeGrafter"/>
</dbReference>
<dbReference type="GO" id="GO:0000287">
    <property type="term" value="F:magnesium ion binding"/>
    <property type="evidence" value="ECO:0007669"/>
    <property type="project" value="UniProtKB-UniRule"/>
</dbReference>
<dbReference type="GO" id="GO:0008966">
    <property type="term" value="F:phosphoglucosamine mutase activity"/>
    <property type="evidence" value="ECO:0007669"/>
    <property type="project" value="UniProtKB-UniRule"/>
</dbReference>
<dbReference type="GO" id="GO:0004615">
    <property type="term" value="F:phosphomannomutase activity"/>
    <property type="evidence" value="ECO:0007669"/>
    <property type="project" value="TreeGrafter"/>
</dbReference>
<dbReference type="GO" id="GO:0005975">
    <property type="term" value="P:carbohydrate metabolic process"/>
    <property type="evidence" value="ECO:0007669"/>
    <property type="project" value="InterPro"/>
</dbReference>
<dbReference type="GO" id="GO:0009252">
    <property type="term" value="P:peptidoglycan biosynthetic process"/>
    <property type="evidence" value="ECO:0007669"/>
    <property type="project" value="TreeGrafter"/>
</dbReference>
<dbReference type="GO" id="GO:0006048">
    <property type="term" value="P:UDP-N-acetylglucosamine biosynthetic process"/>
    <property type="evidence" value="ECO:0007669"/>
    <property type="project" value="TreeGrafter"/>
</dbReference>
<dbReference type="CDD" id="cd05802">
    <property type="entry name" value="GlmM"/>
    <property type="match status" value="1"/>
</dbReference>
<dbReference type="FunFam" id="3.30.310.50:FF:000001">
    <property type="entry name" value="Phosphoglucosamine mutase"/>
    <property type="match status" value="1"/>
</dbReference>
<dbReference type="FunFam" id="3.40.120.10:FF:000001">
    <property type="entry name" value="Phosphoglucosamine mutase"/>
    <property type="match status" value="1"/>
</dbReference>
<dbReference type="FunFam" id="3.40.120.10:FF:000002">
    <property type="entry name" value="Phosphoglucosamine mutase"/>
    <property type="match status" value="1"/>
</dbReference>
<dbReference type="Gene3D" id="3.40.120.10">
    <property type="entry name" value="Alpha-D-Glucose-1,6-Bisphosphate, subunit A, domain 3"/>
    <property type="match status" value="3"/>
</dbReference>
<dbReference type="Gene3D" id="3.30.310.50">
    <property type="entry name" value="Alpha-D-phosphohexomutase, C-terminal domain"/>
    <property type="match status" value="1"/>
</dbReference>
<dbReference type="HAMAP" id="MF_01554_B">
    <property type="entry name" value="GlmM_B"/>
    <property type="match status" value="1"/>
</dbReference>
<dbReference type="InterPro" id="IPR005844">
    <property type="entry name" value="A-D-PHexomutase_a/b/a-I"/>
</dbReference>
<dbReference type="InterPro" id="IPR016055">
    <property type="entry name" value="A-D-PHexomutase_a/b/a-I/II/III"/>
</dbReference>
<dbReference type="InterPro" id="IPR005845">
    <property type="entry name" value="A-D-PHexomutase_a/b/a-II"/>
</dbReference>
<dbReference type="InterPro" id="IPR005846">
    <property type="entry name" value="A-D-PHexomutase_a/b/a-III"/>
</dbReference>
<dbReference type="InterPro" id="IPR005843">
    <property type="entry name" value="A-D-PHexomutase_C"/>
</dbReference>
<dbReference type="InterPro" id="IPR036900">
    <property type="entry name" value="A-D-PHexomutase_C_sf"/>
</dbReference>
<dbReference type="InterPro" id="IPR016066">
    <property type="entry name" value="A-D-PHexomutase_CS"/>
</dbReference>
<dbReference type="InterPro" id="IPR005841">
    <property type="entry name" value="Alpha-D-phosphohexomutase_SF"/>
</dbReference>
<dbReference type="InterPro" id="IPR006352">
    <property type="entry name" value="GlmM_bact"/>
</dbReference>
<dbReference type="InterPro" id="IPR050060">
    <property type="entry name" value="Phosphoglucosamine_mutase"/>
</dbReference>
<dbReference type="NCBIfam" id="TIGR01455">
    <property type="entry name" value="glmM"/>
    <property type="match status" value="1"/>
</dbReference>
<dbReference type="PANTHER" id="PTHR42946:SF1">
    <property type="entry name" value="PHOSPHOGLUCOMUTASE (ALPHA-D-GLUCOSE-1,6-BISPHOSPHATE-DEPENDENT)"/>
    <property type="match status" value="1"/>
</dbReference>
<dbReference type="PANTHER" id="PTHR42946">
    <property type="entry name" value="PHOSPHOHEXOSE MUTASE"/>
    <property type="match status" value="1"/>
</dbReference>
<dbReference type="Pfam" id="PF02878">
    <property type="entry name" value="PGM_PMM_I"/>
    <property type="match status" value="1"/>
</dbReference>
<dbReference type="Pfam" id="PF02879">
    <property type="entry name" value="PGM_PMM_II"/>
    <property type="match status" value="1"/>
</dbReference>
<dbReference type="Pfam" id="PF02880">
    <property type="entry name" value="PGM_PMM_III"/>
    <property type="match status" value="1"/>
</dbReference>
<dbReference type="Pfam" id="PF00408">
    <property type="entry name" value="PGM_PMM_IV"/>
    <property type="match status" value="1"/>
</dbReference>
<dbReference type="PRINTS" id="PR00509">
    <property type="entry name" value="PGMPMM"/>
</dbReference>
<dbReference type="SUPFAM" id="SSF55957">
    <property type="entry name" value="Phosphoglucomutase, C-terminal domain"/>
    <property type="match status" value="1"/>
</dbReference>
<dbReference type="SUPFAM" id="SSF53738">
    <property type="entry name" value="Phosphoglucomutase, first 3 domains"/>
    <property type="match status" value="3"/>
</dbReference>
<dbReference type="PROSITE" id="PS00710">
    <property type="entry name" value="PGM_PMM"/>
    <property type="match status" value="1"/>
</dbReference>
<evidence type="ECO:0000255" key="1">
    <source>
        <dbReference type="HAMAP-Rule" id="MF_01554"/>
    </source>
</evidence>
<evidence type="ECO:0000305" key="2"/>
<keyword id="KW-0413">Isomerase</keyword>
<keyword id="KW-0460">Magnesium</keyword>
<keyword id="KW-0479">Metal-binding</keyword>
<keyword id="KW-0597">Phosphoprotein</keyword>
<keyword id="KW-1185">Reference proteome</keyword>
<organism>
    <name type="scientific">Corynebacterium efficiens (strain DSM 44549 / YS-314 / AJ 12310 / JCM 11189 / NBRC 100395)</name>
    <dbReference type="NCBI Taxonomy" id="196164"/>
    <lineage>
        <taxon>Bacteria</taxon>
        <taxon>Bacillati</taxon>
        <taxon>Actinomycetota</taxon>
        <taxon>Actinomycetes</taxon>
        <taxon>Mycobacteriales</taxon>
        <taxon>Corynebacteriaceae</taxon>
        <taxon>Corynebacterium</taxon>
    </lineage>
</organism>
<accession>Q8FS18</accession>
<proteinExistence type="inferred from homology"/>
<feature type="chain" id="PRO_0000147878" description="Phosphoglucosamine mutase">
    <location>
        <begin position="1"/>
        <end position="447"/>
    </location>
</feature>
<feature type="active site" description="Phosphoserine intermediate" evidence="1">
    <location>
        <position position="104"/>
    </location>
</feature>
<feature type="binding site" description="via phosphate group" evidence="1">
    <location>
        <position position="104"/>
    </location>
    <ligand>
        <name>Mg(2+)</name>
        <dbReference type="ChEBI" id="CHEBI:18420"/>
    </ligand>
</feature>
<feature type="binding site" evidence="1">
    <location>
        <position position="243"/>
    </location>
    <ligand>
        <name>Mg(2+)</name>
        <dbReference type="ChEBI" id="CHEBI:18420"/>
    </ligand>
</feature>
<feature type="binding site" evidence="1">
    <location>
        <position position="245"/>
    </location>
    <ligand>
        <name>Mg(2+)</name>
        <dbReference type="ChEBI" id="CHEBI:18420"/>
    </ligand>
</feature>
<feature type="binding site" evidence="1">
    <location>
        <position position="247"/>
    </location>
    <ligand>
        <name>Mg(2+)</name>
        <dbReference type="ChEBI" id="CHEBI:18420"/>
    </ligand>
</feature>
<feature type="modified residue" description="Phosphoserine" evidence="1">
    <location>
        <position position="104"/>
    </location>
</feature>